<accession>B5F6V5</accession>
<name>RL21_SALA4</name>
<organism>
    <name type="scientific">Salmonella agona (strain SL483)</name>
    <dbReference type="NCBI Taxonomy" id="454166"/>
    <lineage>
        <taxon>Bacteria</taxon>
        <taxon>Pseudomonadati</taxon>
        <taxon>Pseudomonadota</taxon>
        <taxon>Gammaproteobacteria</taxon>
        <taxon>Enterobacterales</taxon>
        <taxon>Enterobacteriaceae</taxon>
        <taxon>Salmonella</taxon>
    </lineage>
</organism>
<feature type="chain" id="PRO_1000143843" description="Large ribosomal subunit protein bL21">
    <location>
        <begin position="1"/>
        <end position="103"/>
    </location>
</feature>
<comment type="function">
    <text evidence="1">This protein binds to 23S rRNA in the presence of protein L20.</text>
</comment>
<comment type="subunit">
    <text evidence="1">Part of the 50S ribosomal subunit. Contacts protein L20.</text>
</comment>
<comment type="similarity">
    <text evidence="1">Belongs to the bacterial ribosomal protein bL21 family.</text>
</comment>
<dbReference type="EMBL" id="CP001138">
    <property type="protein sequence ID" value="ACH50979.1"/>
    <property type="molecule type" value="Genomic_DNA"/>
</dbReference>
<dbReference type="RefSeq" id="WP_000271396.1">
    <property type="nucleotide sequence ID" value="NC_011149.1"/>
</dbReference>
<dbReference type="SMR" id="B5F6V5"/>
<dbReference type="GeneID" id="66757643"/>
<dbReference type="KEGG" id="sea:SeAg_B3494"/>
<dbReference type="HOGENOM" id="CLU_061463_3_3_6"/>
<dbReference type="Proteomes" id="UP000008819">
    <property type="component" value="Chromosome"/>
</dbReference>
<dbReference type="GO" id="GO:0005737">
    <property type="term" value="C:cytoplasm"/>
    <property type="evidence" value="ECO:0007669"/>
    <property type="project" value="UniProtKB-ARBA"/>
</dbReference>
<dbReference type="GO" id="GO:1990904">
    <property type="term" value="C:ribonucleoprotein complex"/>
    <property type="evidence" value="ECO:0007669"/>
    <property type="project" value="UniProtKB-KW"/>
</dbReference>
<dbReference type="GO" id="GO:0005840">
    <property type="term" value="C:ribosome"/>
    <property type="evidence" value="ECO:0007669"/>
    <property type="project" value="UniProtKB-KW"/>
</dbReference>
<dbReference type="GO" id="GO:0019843">
    <property type="term" value="F:rRNA binding"/>
    <property type="evidence" value="ECO:0007669"/>
    <property type="project" value="UniProtKB-UniRule"/>
</dbReference>
<dbReference type="GO" id="GO:0003735">
    <property type="term" value="F:structural constituent of ribosome"/>
    <property type="evidence" value="ECO:0007669"/>
    <property type="project" value="InterPro"/>
</dbReference>
<dbReference type="GO" id="GO:0006412">
    <property type="term" value="P:translation"/>
    <property type="evidence" value="ECO:0007669"/>
    <property type="project" value="UniProtKB-UniRule"/>
</dbReference>
<dbReference type="HAMAP" id="MF_01363">
    <property type="entry name" value="Ribosomal_bL21"/>
    <property type="match status" value="1"/>
</dbReference>
<dbReference type="InterPro" id="IPR028909">
    <property type="entry name" value="bL21-like"/>
</dbReference>
<dbReference type="InterPro" id="IPR036164">
    <property type="entry name" value="bL21-like_sf"/>
</dbReference>
<dbReference type="InterPro" id="IPR001787">
    <property type="entry name" value="Ribosomal_bL21"/>
</dbReference>
<dbReference type="InterPro" id="IPR018258">
    <property type="entry name" value="Ribosomal_bL21_CS"/>
</dbReference>
<dbReference type="NCBIfam" id="TIGR00061">
    <property type="entry name" value="L21"/>
    <property type="match status" value="1"/>
</dbReference>
<dbReference type="PANTHER" id="PTHR21349">
    <property type="entry name" value="50S RIBOSOMAL PROTEIN L21"/>
    <property type="match status" value="1"/>
</dbReference>
<dbReference type="PANTHER" id="PTHR21349:SF0">
    <property type="entry name" value="LARGE RIBOSOMAL SUBUNIT PROTEIN BL21M"/>
    <property type="match status" value="1"/>
</dbReference>
<dbReference type="Pfam" id="PF00829">
    <property type="entry name" value="Ribosomal_L21p"/>
    <property type="match status" value="1"/>
</dbReference>
<dbReference type="SUPFAM" id="SSF141091">
    <property type="entry name" value="L21p-like"/>
    <property type="match status" value="1"/>
</dbReference>
<dbReference type="PROSITE" id="PS01169">
    <property type="entry name" value="RIBOSOMAL_L21"/>
    <property type="match status" value="1"/>
</dbReference>
<sequence length="103" mass="11578">MYAVFQSGGKQHRVSEGQTVRLEKLDIATGETIEFAEVLMIANGEEVKIGVPFVDGGVIKAEVVAHGRGEKVKIVKFRRRKHYRKQQGHRQWFTDVKITGISA</sequence>
<proteinExistence type="inferred from homology"/>
<protein>
    <recommendedName>
        <fullName evidence="1">Large ribosomal subunit protein bL21</fullName>
    </recommendedName>
    <alternativeName>
        <fullName evidence="2">50S ribosomal protein L21</fullName>
    </alternativeName>
</protein>
<reference key="1">
    <citation type="journal article" date="2011" name="J. Bacteriol.">
        <title>Comparative genomics of 28 Salmonella enterica isolates: evidence for CRISPR-mediated adaptive sublineage evolution.</title>
        <authorList>
            <person name="Fricke W.F."/>
            <person name="Mammel M.K."/>
            <person name="McDermott P.F."/>
            <person name="Tartera C."/>
            <person name="White D.G."/>
            <person name="Leclerc J.E."/>
            <person name="Ravel J."/>
            <person name="Cebula T.A."/>
        </authorList>
    </citation>
    <scope>NUCLEOTIDE SEQUENCE [LARGE SCALE GENOMIC DNA]</scope>
    <source>
        <strain>SL483</strain>
    </source>
</reference>
<gene>
    <name evidence="1" type="primary">rplU</name>
    <name type="ordered locus">SeAg_B3494</name>
</gene>
<evidence type="ECO:0000255" key="1">
    <source>
        <dbReference type="HAMAP-Rule" id="MF_01363"/>
    </source>
</evidence>
<evidence type="ECO:0000305" key="2"/>
<keyword id="KW-0687">Ribonucleoprotein</keyword>
<keyword id="KW-0689">Ribosomal protein</keyword>
<keyword id="KW-0694">RNA-binding</keyword>
<keyword id="KW-0699">rRNA-binding</keyword>